<accession>A9BHV0</accession>
<organism>
    <name type="scientific">Petrotoga mobilis (strain DSM 10674 / SJ95)</name>
    <dbReference type="NCBI Taxonomy" id="403833"/>
    <lineage>
        <taxon>Bacteria</taxon>
        <taxon>Thermotogati</taxon>
        <taxon>Thermotogota</taxon>
        <taxon>Thermotogae</taxon>
        <taxon>Petrotogales</taxon>
        <taxon>Petrotogaceae</taxon>
        <taxon>Petrotoga</taxon>
    </lineage>
</organism>
<dbReference type="EMBL" id="CP000879">
    <property type="protein sequence ID" value="ABX32065.1"/>
    <property type="molecule type" value="Genomic_DNA"/>
</dbReference>
<dbReference type="RefSeq" id="WP_012209164.1">
    <property type="nucleotide sequence ID" value="NC_010003.1"/>
</dbReference>
<dbReference type="SMR" id="A9BHV0"/>
<dbReference type="STRING" id="403833.Pmob_1361"/>
<dbReference type="KEGG" id="pmo:Pmob_1361"/>
<dbReference type="eggNOG" id="COG0218">
    <property type="taxonomic scope" value="Bacteria"/>
</dbReference>
<dbReference type="HOGENOM" id="CLU_033732_3_0_0"/>
<dbReference type="OrthoDB" id="9804921at2"/>
<dbReference type="Proteomes" id="UP000000789">
    <property type="component" value="Chromosome"/>
</dbReference>
<dbReference type="GO" id="GO:0005829">
    <property type="term" value="C:cytosol"/>
    <property type="evidence" value="ECO:0007669"/>
    <property type="project" value="TreeGrafter"/>
</dbReference>
<dbReference type="GO" id="GO:0005525">
    <property type="term" value="F:GTP binding"/>
    <property type="evidence" value="ECO:0007669"/>
    <property type="project" value="UniProtKB-UniRule"/>
</dbReference>
<dbReference type="GO" id="GO:0046872">
    <property type="term" value="F:metal ion binding"/>
    <property type="evidence" value="ECO:0007669"/>
    <property type="project" value="UniProtKB-KW"/>
</dbReference>
<dbReference type="GO" id="GO:0000917">
    <property type="term" value="P:division septum assembly"/>
    <property type="evidence" value="ECO:0007669"/>
    <property type="project" value="UniProtKB-KW"/>
</dbReference>
<dbReference type="CDD" id="cd01876">
    <property type="entry name" value="YihA_EngB"/>
    <property type="match status" value="1"/>
</dbReference>
<dbReference type="FunFam" id="3.40.50.300:FF:000098">
    <property type="entry name" value="Probable GTP-binding protein EngB"/>
    <property type="match status" value="1"/>
</dbReference>
<dbReference type="Gene3D" id="3.40.50.300">
    <property type="entry name" value="P-loop containing nucleotide triphosphate hydrolases"/>
    <property type="match status" value="1"/>
</dbReference>
<dbReference type="HAMAP" id="MF_00321">
    <property type="entry name" value="GTPase_EngB"/>
    <property type="match status" value="1"/>
</dbReference>
<dbReference type="InterPro" id="IPR030393">
    <property type="entry name" value="G_ENGB_dom"/>
</dbReference>
<dbReference type="InterPro" id="IPR006073">
    <property type="entry name" value="GTP-bd"/>
</dbReference>
<dbReference type="InterPro" id="IPR019987">
    <property type="entry name" value="GTP-bd_ribosome_bio_YsxC"/>
</dbReference>
<dbReference type="InterPro" id="IPR027417">
    <property type="entry name" value="P-loop_NTPase"/>
</dbReference>
<dbReference type="InterPro" id="IPR005225">
    <property type="entry name" value="Small_GTP-bd"/>
</dbReference>
<dbReference type="NCBIfam" id="TIGR03598">
    <property type="entry name" value="GTPase_YsxC"/>
    <property type="match status" value="1"/>
</dbReference>
<dbReference type="NCBIfam" id="TIGR00231">
    <property type="entry name" value="small_GTP"/>
    <property type="match status" value="1"/>
</dbReference>
<dbReference type="PANTHER" id="PTHR11649:SF13">
    <property type="entry name" value="ENGB-TYPE G DOMAIN-CONTAINING PROTEIN"/>
    <property type="match status" value="1"/>
</dbReference>
<dbReference type="PANTHER" id="PTHR11649">
    <property type="entry name" value="MSS1/TRME-RELATED GTP-BINDING PROTEIN"/>
    <property type="match status" value="1"/>
</dbReference>
<dbReference type="Pfam" id="PF01926">
    <property type="entry name" value="MMR_HSR1"/>
    <property type="match status" value="1"/>
</dbReference>
<dbReference type="SUPFAM" id="SSF52540">
    <property type="entry name" value="P-loop containing nucleoside triphosphate hydrolases"/>
    <property type="match status" value="1"/>
</dbReference>
<dbReference type="PROSITE" id="PS51706">
    <property type="entry name" value="G_ENGB"/>
    <property type="match status" value="1"/>
</dbReference>
<keyword id="KW-0131">Cell cycle</keyword>
<keyword id="KW-0132">Cell division</keyword>
<keyword id="KW-0342">GTP-binding</keyword>
<keyword id="KW-0460">Magnesium</keyword>
<keyword id="KW-0479">Metal-binding</keyword>
<keyword id="KW-0547">Nucleotide-binding</keyword>
<keyword id="KW-0717">Septation</keyword>
<reference key="1">
    <citation type="submission" date="2007-11" db="EMBL/GenBank/DDBJ databases">
        <title>Complete sequence of Petroga mobilis SJ95.</title>
        <authorList>
            <consortium name="US DOE Joint Genome Institute"/>
            <person name="Copeland A."/>
            <person name="Lucas S."/>
            <person name="Lapidus A."/>
            <person name="Barry K."/>
            <person name="Glavina del Rio T."/>
            <person name="Dalin E."/>
            <person name="Tice H."/>
            <person name="Pitluck S."/>
            <person name="Meincke L."/>
            <person name="Brettin T."/>
            <person name="Bruce D."/>
            <person name="Detter J.C."/>
            <person name="Han C."/>
            <person name="Kuske C.R."/>
            <person name="Schmutz J."/>
            <person name="Larimer F."/>
            <person name="Land M."/>
            <person name="Hauser L."/>
            <person name="Kyrpides N."/>
            <person name="Mikhailova N."/>
            <person name="Noll K."/>
            <person name="Richardson P."/>
        </authorList>
    </citation>
    <scope>NUCLEOTIDE SEQUENCE [LARGE SCALE GENOMIC DNA]</scope>
    <source>
        <strain>DSM 10674 / SJ95</strain>
    </source>
</reference>
<gene>
    <name evidence="1" type="primary">engB</name>
    <name type="ordered locus">Pmob_1361</name>
</gene>
<sequence>MKVYKAQLIKTVYKIEDLPPPDKKEIAFAGRSNVGKSSFLNAILGIKIAKVSSTPGKTRSINYYLVNDKYYFVDLPGYGFASVSKQEKERWNVLMNEYFKTRFSLSAVSLLIDHRHMPQKLDYAMVEWLKDLGTPFLFILTKSDKLTKSEKAKLFEDIKRSFSTYGEYIYMPFSSKTKEGLKEVLKTIGEILGDND</sequence>
<comment type="function">
    <text evidence="1">Necessary for normal cell division and for the maintenance of normal septation.</text>
</comment>
<comment type="cofactor">
    <cofactor evidence="1">
        <name>Mg(2+)</name>
        <dbReference type="ChEBI" id="CHEBI:18420"/>
    </cofactor>
</comment>
<comment type="similarity">
    <text evidence="1">Belongs to the TRAFAC class TrmE-Era-EngA-EngB-Septin-like GTPase superfamily. EngB GTPase family.</text>
</comment>
<feature type="chain" id="PRO_1000079176" description="Probable GTP-binding protein EngB">
    <location>
        <begin position="1"/>
        <end position="196"/>
    </location>
</feature>
<feature type="domain" description="EngB-type G" evidence="1">
    <location>
        <begin position="22"/>
        <end position="194"/>
    </location>
</feature>
<feature type="binding site" evidence="1">
    <location>
        <begin position="30"/>
        <end position="37"/>
    </location>
    <ligand>
        <name>GTP</name>
        <dbReference type="ChEBI" id="CHEBI:37565"/>
    </ligand>
</feature>
<feature type="binding site" evidence="1">
    <location>
        <position position="37"/>
    </location>
    <ligand>
        <name>Mg(2+)</name>
        <dbReference type="ChEBI" id="CHEBI:18420"/>
    </ligand>
</feature>
<feature type="binding site" evidence="1">
    <location>
        <begin position="56"/>
        <end position="60"/>
    </location>
    <ligand>
        <name>GTP</name>
        <dbReference type="ChEBI" id="CHEBI:37565"/>
    </ligand>
</feature>
<feature type="binding site" evidence="1">
    <location>
        <position position="58"/>
    </location>
    <ligand>
        <name>Mg(2+)</name>
        <dbReference type="ChEBI" id="CHEBI:18420"/>
    </ligand>
</feature>
<feature type="binding site" evidence="1">
    <location>
        <begin position="74"/>
        <end position="77"/>
    </location>
    <ligand>
        <name>GTP</name>
        <dbReference type="ChEBI" id="CHEBI:37565"/>
    </ligand>
</feature>
<feature type="binding site" evidence="1">
    <location>
        <begin position="141"/>
        <end position="144"/>
    </location>
    <ligand>
        <name>GTP</name>
        <dbReference type="ChEBI" id="CHEBI:37565"/>
    </ligand>
</feature>
<feature type="binding site" evidence="1">
    <location>
        <begin position="173"/>
        <end position="175"/>
    </location>
    <ligand>
        <name>GTP</name>
        <dbReference type="ChEBI" id="CHEBI:37565"/>
    </ligand>
</feature>
<protein>
    <recommendedName>
        <fullName evidence="1">Probable GTP-binding protein EngB</fullName>
    </recommendedName>
</protein>
<proteinExistence type="inferred from homology"/>
<evidence type="ECO:0000255" key="1">
    <source>
        <dbReference type="HAMAP-Rule" id="MF_00321"/>
    </source>
</evidence>
<name>ENGB_PETMO</name>